<evidence type="ECO:0000255" key="1">
    <source>
        <dbReference type="HAMAP-Rule" id="MF_00303"/>
    </source>
</evidence>
<evidence type="ECO:0000256" key="2">
    <source>
        <dbReference type="SAM" id="MobiDB-lite"/>
    </source>
</evidence>
<keyword id="KW-0131">Cell cycle</keyword>
<keyword id="KW-0132">Cell division</keyword>
<keyword id="KW-0143">Chaperone</keyword>
<keyword id="KW-0963">Cytoplasm</keyword>
<keyword id="KW-0413">Isomerase</keyword>
<keyword id="KW-0697">Rotamase</keyword>
<dbReference type="EC" id="5.2.1.8" evidence="1"/>
<dbReference type="EMBL" id="CP000820">
    <property type="protein sequence ID" value="ABW14633.1"/>
    <property type="molecule type" value="Genomic_DNA"/>
</dbReference>
<dbReference type="RefSeq" id="WP_020462742.1">
    <property type="nucleotide sequence ID" value="NC_009921.1"/>
</dbReference>
<dbReference type="SMR" id="A8L1X3"/>
<dbReference type="STRING" id="298653.Franean1_5275"/>
<dbReference type="KEGG" id="fre:Franean1_5275"/>
<dbReference type="eggNOG" id="COG0544">
    <property type="taxonomic scope" value="Bacteria"/>
</dbReference>
<dbReference type="HOGENOM" id="CLU_033058_3_0_11"/>
<dbReference type="GO" id="GO:0005737">
    <property type="term" value="C:cytoplasm"/>
    <property type="evidence" value="ECO:0007669"/>
    <property type="project" value="UniProtKB-SubCell"/>
</dbReference>
<dbReference type="GO" id="GO:0003755">
    <property type="term" value="F:peptidyl-prolyl cis-trans isomerase activity"/>
    <property type="evidence" value="ECO:0007669"/>
    <property type="project" value="UniProtKB-UniRule"/>
</dbReference>
<dbReference type="GO" id="GO:0044183">
    <property type="term" value="F:protein folding chaperone"/>
    <property type="evidence" value="ECO:0007669"/>
    <property type="project" value="TreeGrafter"/>
</dbReference>
<dbReference type="GO" id="GO:0043022">
    <property type="term" value="F:ribosome binding"/>
    <property type="evidence" value="ECO:0007669"/>
    <property type="project" value="TreeGrafter"/>
</dbReference>
<dbReference type="GO" id="GO:0051083">
    <property type="term" value="P:'de novo' cotranslational protein folding"/>
    <property type="evidence" value="ECO:0007669"/>
    <property type="project" value="TreeGrafter"/>
</dbReference>
<dbReference type="GO" id="GO:0051301">
    <property type="term" value="P:cell division"/>
    <property type="evidence" value="ECO:0007669"/>
    <property type="project" value="UniProtKB-KW"/>
</dbReference>
<dbReference type="GO" id="GO:0061077">
    <property type="term" value="P:chaperone-mediated protein folding"/>
    <property type="evidence" value="ECO:0007669"/>
    <property type="project" value="TreeGrafter"/>
</dbReference>
<dbReference type="GO" id="GO:0015031">
    <property type="term" value="P:protein transport"/>
    <property type="evidence" value="ECO:0007669"/>
    <property type="project" value="UniProtKB-UniRule"/>
</dbReference>
<dbReference type="GO" id="GO:0043335">
    <property type="term" value="P:protein unfolding"/>
    <property type="evidence" value="ECO:0007669"/>
    <property type="project" value="TreeGrafter"/>
</dbReference>
<dbReference type="Gene3D" id="3.10.50.40">
    <property type="match status" value="1"/>
</dbReference>
<dbReference type="Gene3D" id="3.30.70.1050">
    <property type="entry name" value="Trigger factor ribosome-binding domain"/>
    <property type="match status" value="1"/>
</dbReference>
<dbReference type="Gene3D" id="1.10.3120.10">
    <property type="entry name" value="Trigger factor, C-terminal domain"/>
    <property type="match status" value="1"/>
</dbReference>
<dbReference type="HAMAP" id="MF_00303">
    <property type="entry name" value="Trigger_factor_Tig"/>
    <property type="match status" value="1"/>
</dbReference>
<dbReference type="InterPro" id="IPR046357">
    <property type="entry name" value="PPIase_dom_sf"/>
</dbReference>
<dbReference type="InterPro" id="IPR001179">
    <property type="entry name" value="PPIase_FKBP_dom"/>
</dbReference>
<dbReference type="InterPro" id="IPR005215">
    <property type="entry name" value="Trig_fac"/>
</dbReference>
<dbReference type="InterPro" id="IPR008880">
    <property type="entry name" value="Trigger_fac_C"/>
</dbReference>
<dbReference type="InterPro" id="IPR037041">
    <property type="entry name" value="Trigger_fac_C_sf"/>
</dbReference>
<dbReference type="InterPro" id="IPR008881">
    <property type="entry name" value="Trigger_fac_ribosome-bd_bac"/>
</dbReference>
<dbReference type="InterPro" id="IPR036611">
    <property type="entry name" value="Trigger_fac_ribosome-bd_sf"/>
</dbReference>
<dbReference type="InterPro" id="IPR027304">
    <property type="entry name" value="Trigger_fact/SurA_dom_sf"/>
</dbReference>
<dbReference type="NCBIfam" id="TIGR00115">
    <property type="entry name" value="tig"/>
    <property type="match status" value="1"/>
</dbReference>
<dbReference type="PANTHER" id="PTHR30560">
    <property type="entry name" value="TRIGGER FACTOR CHAPERONE AND PEPTIDYL-PROLYL CIS/TRANS ISOMERASE"/>
    <property type="match status" value="1"/>
</dbReference>
<dbReference type="PANTHER" id="PTHR30560:SF3">
    <property type="entry name" value="TRIGGER FACTOR-LIKE PROTEIN TIG, CHLOROPLASTIC"/>
    <property type="match status" value="1"/>
</dbReference>
<dbReference type="Pfam" id="PF00254">
    <property type="entry name" value="FKBP_C"/>
    <property type="match status" value="1"/>
</dbReference>
<dbReference type="Pfam" id="PF05698">
    <property type="entry name" value="Trigger_C"/>
    <property type="match status" value="1"/>
</dbReference>
<dbReference type="Pfam" id="PF05697">
    <property type="entry name" value="Trigger_N"/>
    <property type="match status" value="1"/>
</dbReference>
<dbReference type="SUPFAM" id="SSF54534">
    <property type="entry name" value="FKBP-like"/>
    <property type="match status" value="1"/>
</dbReference>
<dbReference type="SUPFAM" id="SSF109998">
    <property type="entry name" value="Triger factor/SurA peptide-binding domain-like"/>
    <property type="match status" value="1"/>
</dbReference>
<dbReference type="SUPFAM" id="SSF102735">
    <property type="entry name" value="Trigger factor ribosome-binding domain"/>
    <property type="match status" value="1"/>
</dbReference>
<dbReference type="PROSITE" id="PS50059">
    <property type="entry name" value="FKBP_PPIASE"/>
    <property type="match status" value="1"/>
</dbReference>
<name>TIG_PARS2</name>
<accession>A8L1X3</accession>
<feature type="chain" id="PRO_1000115536" description="Trigger factor">
    <location>
        <begin position="1"/>
        <end position="507"/>
    </location>
</feature>
<feature type="domain" description="PPIase FKBP-type" evidence="1">
    <location>
        <begin position="162"/>
        <end position="243"/>
    </location>
</feature>
<feature type="region of interest" description="Disordered" evidence="2">
    <location>
        <begin position="434"/>
        <end position="507"/>
    </location>
</feature>
<feature type="compositionally biased region" description="Acidic residues" evidence="2">
    <location>
        <begin position="442"/>
        <end position="460"/>
    </location>
</feature>
<feature type="compositionally biased region" description="Low complexity" evidence="2">
    <location>
        <begin position="461"/>
        <end position="488"/>
    </location>
</feature>
<proteinExistence type="inferred from homology"/>
<gene>
    <name evidence="1" type="primary">tig</name>
    <name type="ordered locus">Franean1_5275</name>
</gene>
<comment type="function">
    <text evidence="1">Involved in protein export. Acts as a chaperone by maintaining the newly synthesized protein in an open conformation. Functions as a peptidyl-prolyl cis-trans isomerase.</text>
</comment>
<comment type="catalytic activity">
    <reaction evidence="1">
        <text>[protein]-peptidylproline (omega=180) = [protein]-peptidylproline (omega=0)</text>
        <dbReference type="Rhea" id="RHEA:16237"/>
        <dbReference type="Rhea" id="RHEA-COMP:10747"/>
        <dbReference type="Rhea" id="RHEA-COMP:10748"/>
        <dbReference type="ChEBI" id="CHEBI:83833"/>
        <dbReference type="ChEBI" id="CHEBI:83834"/>
        <dbReference type="EC" id="5.2.1.8"/>
    </reaction>
</comment>
<comment type="subcellular location">
    <subcellularLocation>
        <location>Cytoplasm</location>
    </subcellularLocation>
    <text evidence="1">About half TF is bound to the ribosome near the polypeptide exit tunnel while the other half is free in the cytoplasm.</text>
</comment>
<comment type="domain">
    <text evidence="1">Consists of 3 domains; the N-terminus binds the ribosome, the middle domain has PPIase activity, while the C-terminus has intrinsic chaperone activity on its own.</text>
</comment>
<comment type="similarity">
    <text evidence="1">Belongs to the FKBP-type PPIase family. Tig subfamily.</text>
</comment>
<reference key="1">
    <citation type="journal article" date="2007" name="Genome Res.">
        <title>Genome characteristics of facultatively symbiotic Frankia sp. strains reflect host range and host plant biogeography.</title>
        <authorList>
            <person name="Normand P."/>
            <person name="Lapierre P."/>
            <person name="Tisa L.S."/>
            <person name="Gogarten J.P."/>
            <person name="Alloisio N."/>
            <person name="Bagnarol E."/>
            <person name="Bassi C.A."/>
            <person name="Berry A.M."/>
            <person name="Bickhart D.M."/>
            <person name="Choisne N."/>
            <person name="Couloux A."/>
            <person name="Cournoyer B."/>
            <person name="Cruveiller S."/>
            <person name="Daubin V."/>
            <person name="Demange N."/>
            <person name="Francino M.P."/>
            <person name="Goltsman E."/>
            <person name="Huang Y."/>
            <person name="Kopp O.R."/>
            <person name="Labarre L."/>
            <person name="Lapidus A."/>
            <person name="Lavire C."/>
            <person name="Marechal J."/>
            <person name="Martinez M."/>
            <person name="Mastronunzio J.E."/>
            <person name="Mullin B.C."/>
            <person name="Niemann J."/>
            <person name="Pujic P."/>
            <person name="Rawnsley T."/>
            <person name="Rouy Z."/>
            <person name="Schenowitz C."/>
            <person name="Sellstedt A."/>
            <person name="Tavares F."/>
            <person name="Tomkins J.P."/>
            <person name="Vallenet D."/>
            <person name="Valverde C."/>
            <person name="Wall L.G."/>
            <person name="Wang Y."/>
            <person name="Medigue C."/>
            <person name="Benson D.R."/>
        </authorList>
    </citation>
    <scope>NUCLEOTIDE SEQUENCE [LARGE SCALE GENOMIC DNA]</scope>
    <source>
        <strain>EAN1pec</strain>
    </source>
</reference>
<organism>
    <name type="scientific">Parafrankia sp. (strain EAN1pec)</name>
    <dbReference type="NCBI Taxonomy" id="298653"/>
    <lineage>
        <taxon>Bacteria</taxon>
        <taxon>Bacillati</taxon>
        <taxon>Actinomycetota</taxon>
        <taxon>Actinomycetes</taxon>
        <taxon>Frankiales</taxon>
        <taxon>Frankiaceae</taxon>
        <taxon>Parafrankia</taxon>
    </lineage>
</organism>
<protein>
    <recommendedName>
        <fullName evidence="1">Trigger factor</fullName>
        <shortName evidence="1">TF</shortName>
        <ecNumber evidence="1">5.2.1.8</ecNumber>
    </recommendedName>
    <alternativeName>
        <fullName evidence="1">PPIase</fullName>
    </alternativeName>
</protein>
<sequence length="507" mass="54926">MKATKETLSPTRVKLTVEVPFDELKPSVDATYRKLARQVRVSGFRPGKVPPRILDQRLGRGVILDEAIQEALPRLYSEAVQAEEVDVLSRPEVDITEFADGAQLVFTAEMDVRPEVTLPEFGELELVVEPATVTDEQVEEHLTNLRDRFAVLKPVERPVQEGDFVSLDLSASVDGEAIEDATATGMSYEVGSGNLIDGIDEAIAGASDGDERTFDTELLAGEYTGRTAQVTAVVRGVKEKELPELDDDFATTASEFDTLEELRADVRTRLESNRKVEQLGEARDKMLDKLIELVEVPVPDSVLAGELEAREHRLGHELEHIGTDRATYLETLGQSAEEFDAEVRSSAGKAIRSQFILDAVIDAESIGLDQGELMEQILMRAQRAGVQPDQYAQQLAQGEGLTALMADVLRTKALFLLLENAKVVDTEGNAVELNLPRRPSGEAEDDVRDISDELDAEELEVPAAAPSAEVTAAAGDEATATATATDADTATDADGAGDSELPASETK</sequence>